<evidence type="ECO:0000255" key="1">
    <source>
        <dbReference type="HAMAP-Rule" id="MF_01080"/>
    </source>
</evidence>
<reference key="1">
    <citation type="journal article" date="2002" name="Nature">
        <title>Comparison of the genomes of two Xanthomonas pathogens with differing host specificities.</title>
        <authorList>
            <person name="da Silva A.C.R."/>
            <person name="Ferro J.A."/>
            <person name="Reinach F.C."/>
            <person name="Farah C.S."/>
            <person name="Furlan L.R."/>
            <person name="Quaggio R.B."/>
            <person name="Monteiro-Vitorello C.B."/>
            <person name="Van Sluys M.A."/>
            <person name="Almeida N.F. Jr."/>
            <person name="Alves L.M.C."/>
            <person name="do Amaral A.M."/>
            <person name="Bertolini M.C."/>
            <person name="Camargo L.E.A."/>
            <person name="Camarotte G."/>
            <person name="Cannavan F."/>
            <person name="Cardozo J."/>
            <person name="Chambergo F."/>
            <person name="Ciapina L.P."/>
            <person name="Cicarelli R.M.B."/>
            <person name="Coutinho L.L."/>
            <person name="Cursino-Santos J.R."/>
            <person name="El-Dorry H."/>
            <person name="Faria J.B."/>
            <person name="Ferreira A.J.S."/>
            <person name="Ferreira R.C.C."/>
            <person name="Ferro M.I.T."/>
            <person name="Formighieri E.F."/>
            <person name="Franco M.C."/>
            <person name="Greggio C.C."/>
            <person name="Gruber A."/>
            <person name="Katsuyama A.M."/>
            <person name="Kishi L.T."/>
            <person name="Leite R.P."/>
            <person name="Lemos E.G.M."/>
            <person name="Lemos M.V.F."/>
            <person name="Locali E.C."/>
            <person name="Machado M.A."/>
            <person name="Madeira A.M.B.N."/>
            <person name="Martinez-Rossi N.M."/>
            <person name="Martins E.C."/>
            <person name="Meidanis J."/>
            <person name="Menck C.F.M."/>
            <person name="Miyaki C.Y."/>
            <person name="Moon D.H."/>
            <person name="Moreira L.M."/>
            <person name="Novo M.T.M."/>
            <person name="Okura V.K."/>
            <person name="Oliveira M.C."/>
            <person name="Oliveira V.R."/>
            <person name="Pereira H.A."/>
            <person name="Rossi A."/>
            <person name="Sena J.A.D."/>
            <person name="Silva C."/>
            <person name="de Souza R.F."/>
            <person name="Spinola L.A.F."/>
            <person name="Takita M.A."/>
            <person name="Tamura R.E."/>
            <person name="Teixeira E.C."/>
            <person name="Tezza R.I.D."/>
            <person name="Trindade dos Santos M."/>
            <person name="Truffi D."/>
            <person name="Tsai S.M."/>
            <person name="White F.F."/>
            <person name="Setubal J.C."/>
            <person name="Kitajima J.P."/>
        </authorList>
    </citation>
    <scope>NUCLEOTIDE SEQUENCE [LARGE SCALE GENOMIC DNA]</scope>
    <source>
        <strain>ATCC 33913 / DSM 3586 / NCPPB 528 / LMG 568 / P 25</strain>
    </source>
</reference>
<organism>
    <name type="scientific">Xanthomonas campestris pv. campestris (strain ATCC 33913 / DSM 3586 / NCPPB 528 / LMG 568 / P 25)</name>
    <dbReference type="NCBI Taxonomy" id="190485"/>
    <lineage>
        <taxon>Bacteria</taxon>
        <taxon>Pseudomonadati</taxon>
        <taxon>Pseudomonadota</taxon>
        <taxon>Gammaproteobacteria</taxon>
        <taxon>Lysobacterales</taxon>
        <taxon>Lysobacteraceae</taxon>
        <taxon>Xanthomonas</taxon>
    </lineage>
</organism>
<feature type="chain" id="PRO_0000121946" description="tRNA pseudouridine synthase B">
    <location>
        <begin position="1"/>
        <end position="308"/>
    </location>
</feature>
<feature type="active site" description="Nucleophile" evidence="1">
    <location>
        <position position="47"/>
    </location>
</feature>
<comment type="function">
    <text evidence="1">Responsible for synthesis of pseudouridine from uracil-55 in the psi GC loop of transfer RNAs.</text>
</comment>
<comment type="catalytic activity">
    <reaction evidence="1">
        <text>uridine(55) in tRNA = pseudouridine(55) in tRNA</text>
        <dbReference type="Rhea" id="RHEA:42532"/>
        <dbReference type="Rhea" id="RHEA-COMP:10101"/>
        <dbReference type="Rhea" id="RHEA-COMP:10102"/>
        <dbReference type="ChEBI" id="CHEBI:65314"/>
        <dbReference type="ChEBI" id="CHEBI:65315"/>
        <dbReference type="EC" id="5.4.99.25"/>
    </reaction>
</comment>
<comment type="similarity">
    <text evidence="1">Belongs to the pseudouridine synthase TruB family. Type 1 subfamily.</text>
</comment>
<protein>
    <recommendedName>
        <fullName evidence="1">tRNA pseudouridine synthase B</fullName>
        <ecNumber evidence="1">5.4.99.25</ecNumber>
    </recommendedName>
    <alternativeName>
        <fullName evidence="1">tRNA pseudouridine(55) synthase</fullName>
        <shortName evidence="1">Psi55 synthase</shortName>
    </alternativeName>
    <alternativeName>
        <fullName evidence="1">tRNA pseudouridylate synthase</fullName>
    </alternativeName>
    <alternativeName>
        <fullName evidence="1">tRNA-uridine isomerase</fullName>
    </alternativeName>
</protein>
<gene>
    <name evidence="1" type="primary">truB</name>
    <name type="ordered locus">XCC2509</name>
</gene>
<sequence length="308" mass="32486">MRPRITFRPLHGILLLDKPAGLSSNNALQAARRLLRAEKGGHTGSLDPLATGLLPLCFGEATKIAGLLLGSAKAYDAEIVLGVTTDTDDADGQPLRERSVPALSEAALQAALAPFIGRIQQQAPIYSALKQGGEPLYAKARRGEVIEAPVREVEVHAITLTSYASPRLRLRVTCGSGTYIRSLARDLGEVLGCGAHIAALRRVWVEPFRTPEMITLEALTALVESGADAAQLLLPVAAGLSDFAQITLDATLAARFRMGQRLRDPAFPEGQVAVFDADGSPAGLGLVDADGRLSPQRLFNGLNAAAAC</sequence>
<name>TRUB_XANCP</name>
<keyword id="KW-0413">Isomerase</keyword>
<keyword id="KW-1185">Reference proteome</keyword>
<keyword id="KW-0819">tRNA processing</keyword>
<dbReference type="EC" id="5.4.99.25" evidence="1"/>
<dbReference type="EMBL" id="AE008922">
    <property type="protein sequence ID" value="AAM41783.1"/>
    <property type="molecule type" value="Genomic_DNA"/>
</dbReference>
<dbReference type="RefSeq" id="NP_637859.1">
    <property type="nucleotide sequence ID" value="NC_003902.1"/>
</dbReference>
<dbReference type="RefSeq" id="WP_011037642.1">
    <property type="nucleotide sequence ID" value="NC_003902.1"/>
</dbReference>
<dbReference type="SMR" id="Q8P7U9"/>
<dbReference type="STRING" id="190485.XCC2509"/>
<dbReference type="EnsemblBacteria" id="AAM41783">
    <property type="protein sequence ID" value="AAM41783"/>
    <property type="gene ID" value="XCC2509"/>
</dbReference>
<dbReference type="KEGG" id="xcc:XCC2509"/>
<dbReference type="PATRIC" id="fig|190485.4.peg.2676"/>
<dbReference type="eggNOG" id="COG0130">
    <property type="taxonomic scope" value="Bacteria"/>
</dbReference>
<dbReference type="HOGENOM" id="CLU_032087_0_3_6"/>
<dbReference type="OrthoDB" id="9802309at2"/>
<dbReference type="Proteomes" id="UP000001010">
    <property type="component" value="Chromosome"/>
</dbReference>
<dbReference type="GO" id="GO:0009982">
    <property type="term" value="F:pseudouridine synthase activity"/>
    <property type="evidence" value="ECO:0000318"/>
    <property type="project" value="GO_Central"/>
</dbReference>
<dbReference type="GO" id="GO:0003723">
    <property type="term" value="F:RNA binding"/>
    <property type="evidence" value="ECO:0007669"/>
    <property type="project" value="InterPro"/>
</dbReference>
<dbReference type="GO" id="GO:0160148">
    <property type="term" value="F:tRNA pseudouridine(55) synthase activity"/>
    <property type="evidence" value="ECO:0007669"/>
    <property type="project" value="UniProtKB-EC"/>
</dbReference>
<dbReference type="GO" id="GO:1990481">
    <property type="term" value="P:mRNA pseudouridine synthesis"/>
    <property type="evidence" value="ECO:0000318"/>
    <property type="project" value="GO_Central"/>
</dbReference>
<dbReference type="GO" id="GO:0006400">
    <property type="term" value="P:tRNA modification"/>
    <property type="evidence" value="ECO:0000318"/>
    <property type="project" value="GO_Central"/>
</dbReference>
<dbReference type="GO" id="GO:0031119">
    <property type="term" value="P:tRNA pseudouridine synthesis"/>
    <property type="evidence" value="ECO:0007669"/>
    <property type="project" value="UniProtKB-UniRule"/>
</dbReference>
<dbReference type="CDD" id="cd02573">
    <property type="entry name" value="PseudoU_synth_EcTruB"/>
    <property type="match status" value="1"/>
</dbReference>
<dbReference type="CDD" id="cd21152">
    <property type="entry name" value="PUA_TruB_bacterial"/>
    <property type="match status" value="1"/>
</dbReference>
<dbReference type="FunFam" id="3.30.2350.10:FF:000011">
    <property type="entry name" value="tRNA pseudouridine synthase B"/>
    <property type="match status" value="1"/>
</dbReference>
<dbReference type="Gene3D" id="3.30.2350.10">
    <property type="entry name" value="Pseudouridine synthase"/>
    <property type="match status" value="1"/>
</dbReference>
<dbReference type="Gene3D" id="2.30.130.10">
    <property type="entry name" value="PUA domain"/>
    <property type="match status" value="1"/>
</dbReference>
<dbReference type="HAMAP" id="MF_01080">
    <property type="entry name" value="TruB_bact"/>
    <property type="match status" value="1"/>
</dbReference>
<dbReference type="InterPro" id="IPR020103">
    <property type="entry name" value="PsdUridine_synth_cat_dom_sf"/>
</dbReference>
<dbReference type="InterPro" id="IPR002501">
    <property type="entry name" value="PsdUridine_synth_N"/>
</dbReference>
<dbReference type="InterPro" id="IPR015947">
    <property type="entry name" value="PUA-like_sf"/>
</dbReference>
<dbReference type="InterPro" id="IPR036974">
    <property type="entry name" value="PUA_sf"/>
</dbReference>
<dbReference type="InterPro" id="IPR014780">
    <property type="entry name" value="tRNA_psdUridine_synth_TruB"/>
</dbReference>
<dbReference type="InterPro" id="IPR015240">
    <property type="entry name" value="tRNA_sdUridine_synth_fam1_C"/>
</dbReference>
<dbReference type="InterPro" id="IPR032819">
    <property type="entry name" value="TruB_C"/>
</dbReference>
<dbReference type="NCBIfam" id="TIGR00431">
    <property type="entry name" value="TruB"/>
    <property type="match status" value="1"/>
</dbReference>
<dbReference type="PANTHER" id="PTHR13767:SF2">
    <property type="entry name" value="PSEUDOURIDYLATE SYNTHASE TRUB1"/>
    <property type="match status" value="1"/>
</dbReference>
<dbReference type="PANTHER" id="PTHR13767">
    <property type="entry name" value="TRNA-PSEUDOURIDINE SYNTHASE"/>
    <property type="match status" value="1"/>
</dbReference>
<dbReference type="Pfam" id="PF09157">
    <property type="entry name" value="TruB-C_2"/>
    <property type="match status" value="1"/>
</dbReference>
<dbReference type="Pfam" id="PF16198">
    <property type="entry name" value="TruB_C_2"/>
    <property type="match status" value="1"/>
</dbReference>
<dbReference type="Pfam" id="PF01509">
    <property type="entry name" value="TruB_N"/>
    <property type="match status" value="1"/>
</dbReference>
<dbReference type="SUPFAM" id="SSF55120">
    <property type="entry name" value="Pseudouridine synthase"/>
    <property type="match status" value="1"/>
</dbReference>
<dbReference type="SUPFAM" id="SSF88697">
    <property type="entry name" value="PUA domain-like"/>
    <property type="match status" value="1"/>
</dbReference>
<accession>Q8P7U9</accession>
<proteinExistence type="inferred from homology"/>